<evidence type="ECO:0000255" key="1">
    <source>
        <dbReference type="HAMAP-Rule" id="MF_00415"/>
    </source>
</evidence>
<name>FLGH_XANCP</name>
<reference key="1">
    <citation type="journal article" date="2002" name="Nature">
        <title>Comparison of the genomes of two Xanthomonas pathogens with differing host specificities.</title>
        <authorList>
            <person name="da Silva A.C.R."/>
            <person name="Ferro J.A."/>
            <person name="Reinach F.C."/>
            <person name="Farah C.S."/>
            <person name="Furlan L.R."/>
            <person name="Quaggio R.B."/>
            <person name="Monteiro-Vitorello C.B."/>
            <person name="Van Sluys M.A."/>
            <person name="Almeida N.F. Jr."/>
            <person name="Alves L.M.C."/>
            <person name="do Amaral A.M."/>
            <person name="Bertolini M.C."/>
            <person name="Camargo L.E.A."/>
            <person name="Camarotte G."/>
            <person name="Cannavan F."/>
            <person name="Cardozo J."/>
            <person name="Chambergo F."/>
            <person name="Ciapina L.P."/>
            <person name="Cicarelli R.M.B."/>
            <person name="Coutinho L.L."/>
            <person name="Cursino-Santos J.R."/>
            <person name="El-Dorry H."/>
            <person name="Faria J.B."/>
            <person name="Ferreira A.J.S."/>
            <person name="Ferreira R.C.C."/>
            <person name="Ferro M.I.T."/>
            <person name="Formighieri E.F."/>
            <person name="Franco M.C."/>
            <person name="Greggio C.C."/>
            <person name="Gruber A."/>
            <person name="Katsuyama A.M."/>
            <person name="Kishi L.T."/>
            <person name="Leite R.P."/>
            <person name="Lemos E.G.M."/>
            <person name="Lemos M.V.F."/>
            <person name="Locali E.C."/>
            <person name="Machado M.A."/>
            <person name="Madeira A.M.B.N."/>
            <person name="Martinez-Rossi N.M."/>
            <person name="Martins E.C."/>
            <person name="Meidanis J."/>
            <person name="Menck C.F.M."/>
            <person name="Miyaki C.Y."/>
            <person name="Moon D.H."/>
            <person name="Moreira L.M."/>
            <person name="Novo M.T.M."/>
            <person name="Okura V.K."/>
            <person name="Oliveira M.C."/>
            <person name="Oliveira V.R."/>
            <person name="Pereira H.A."/>
            <person name="Rossi A."/>
            <person name="Sena J.A.D."/>
            <person name="Silva C."/>
            <person name="de Souza R.F."/>
            <person name="Spinola L.A.F."/>
            <person name="Takita M.A."/>
            <person name="Tamura R.E."/>
            <person name="Teixeira E.C."/>
            <person name="Tezza R.I.D."/>
            <person name="Trindade dos Santos M."/>
            <person name="Truffi D."/>
            <person name="Tsai S.M."/>
            <person name="White F.F."/>
            <person name="Setubal J.C."/>
            <person name="Kitajima J.P."/>
        </authorList>
    </citation>
    <scope>NUCLEOTIDE SEQUENCE [LARGE SCALE GENOMIC DNA]</scope>
    <source>
        <strain>ATCC 33913 / DSM 3586 / NCPPB 528 / LMG 568 / P 25</strain>
    </source>
</reference>
<protein>
    <recommendedName>
        <fullName evidence="1">Flagellar L-ring protein</fullName>
    </recommendedName>
    <alternativeName>
        <fullName evidence="1">Basal body L-ring protein</fullName>
    </alternativeName>
</protein>
<comment type="function">
    <text evidence="1">Assembles around the rod to form the L-ring and probably protects the motor/basal body from shearing forces during rotation.</text>
</comment>
<comment type="subunit">
    <text evidence="1">The basal body constitutes a major portion of the flagellar organelle and consists of four rings (L,P,S, and M) mounted on a central rod.</text>
</comment>
<comment type="subcellular location">
    <subcellularLocation>
        <location evidence="1">Cell outer membrane</location>
        <topology evidence="1">Lipid-anchor</topology>
    </subcellularLocation>
    <subcellularLocation>
        <location evidence="1">Bacterial flagellum basal body</location>
    </subcellularLocation>
</comment>
<comment type="similarity">
    <text evidence="1">Belongs to the FlgH family.</text>
</comment>
<keyword id="KW-0975">Bacterial flagellum</keyword>
<keyword id="KW-0998">Cell outer membrane</keyword>
<keyword id="KW-0449">Lipoprotein</keyword>
<keyword id="KW-0472">Membrane</keyword>
<keyword id="KW-0564">Palmitate</keyword>
<keyword id="KW-1185">Reference proteome</keyword>
<keyword id="KW-0732">Signal</keyword>
<proteinExistence type="inferred from homology"/>
<feature type="signal peptide" evidence="1">
    <location>
        <begin position="1"/>
        <end position="15"/>
    </location>
</feature>
<feature type="chain" id="PRO_0000009485" description="Flagellar L-ring protein">
    <location>
        <begin position="16"/>
        <end position="230"/>
    </location>
</feature>
<feature type="lipid moiety-binding region" description="N-palmitoyl cysteine" evidence="1">
    <location>
        <position position="16"/>
    </location>
</feature>
<feature type="lipid moiety-binding region" description="S-diacylglycerol cysteine" evidence="1">
    <location>
        <position position="16"/>
    </location>
</feature>
<dbReference type="EMBL" id="AE008922">
    <property type="protein sequence ID" value="AAM41235.1"/>
    <property type="molecule type" value="Genomic_DNA"/>
</dbReference>
<dbReference type="RefSeq" id="NP_637311.1">
    <property type="nucleotide sequence ID" value="NC_003902.1"/>
</dbReference>
<dbReference type="RefSeq" id="WP_011037111.1">
    <property type="nucleotide sequence ID" value="NC_003902.1"/>
</dbReference>
<dbReference type="SMR" id="Q8P9B9"/>
<dbReference type="STRING" id="190485.XCC1946"/>
<dbReference type="EnsemblBacteria" id="AAM41235">
    <property type="protein sequence ID" value="AAM41235"/>
    <property type="gene ID" value="XCC1946"/>
</dbReference>
<dbReference type="GeneID" id="58013498"/>
<dbReference type="KEGG" id="xcc:XCC1946"/>
<dbReference type="PATRIC" id="fig|190485.4.peg.2080"/>
<dbReference type="eggNOG" id="COG2063">
    <property type="taxonomic scope" value="Bacteria"/>
</dbReference>
<dbReference type="HOGENOM" id="CLU_069313_0_1_6"/>
<dbReference type="OrthoDB" id="9789463at2"/>
<dbReference type="Proteomes" id="UP000001010">
    <property type="component" value="Chromosome"/>
</dbReference>
<dbReference type="GO" id="GO:0009427">
    <property type="term" value="C:bacterial-type flagellum basal body, distal rod, L ring"/>
    <property type="evidence" value="ECO:0007669"/>
    <property type="project" value="InterPro"/>
</dbReference>
<dbReference type="GO" id="GO:0009279">
    <property type="term" value="C:cell outer membrane"/>
    <property type="evidence" value="ECO:0007669"/>
    <property type="project" value="UniProtKB-SubCell"/>
</dbReference>
<dbReference type="GO" id="GO:0003774">
    <property type="term" value="F:cytoskeletal motor activity"/>
    <property type="evidence" value="ECO:0007669"/>
    <property type="project" value="InterPro"/>
</dbReference>
<dbReference type="GO" id="GO:0071973">
    <property type="term" value="P:bacterial-type flagellum-dependent cell motility"/>
    <property type="evidence" value="ECO:0007669"/>
    <property type="project" value="InterPro"/>
</dbReference>
<dbReference type="HAMAP" id="MF_00415">
    <property type="entry name" value="FlgH"/>
    <property type="match status" value="1"/>
</dbReference>
<dbReference type="InterPro" id="IPR000527">
    <property type="entry name" value="Flag_Lring"/>
</dbReference>
<dbReference type="NCBIfam" id="NF001304">
    <property type="entry name" value="PRK00249.1-4"/>
    <property type="match status" value="1"/>
</dbReference>
<dbReference type="PANTHER" id="PTHR34933">
    <property type="entry name" value="FLAGELLAR L-RING PROTEIN"/>
    <property type="match status" value="1"/>
</dbReference>
<dbReference type="PANTHER" id="PTHR34933:SF1">
    <property type="entry name" value="FLAGELLAR L-RING PROTEIN"/>
    <property type="match status" value="1"/>
</dbReference>
<dbReference type="Pfam" id="PF02107">
    <property type="entry name" value="FlgH"/>
    <property type="match status" value="1"/>
</dbReference>
<dbReference type="PRINTS" id="PR01008">
    <property type="entry name" value="FLGLRINGFLGH"/>
</dbReference>
<dbReference type="PROSITE" id="PS51257">
    <property type="entry name" value="PROKAR_LIPOPROTEIN"/>
    <property type="match status" value="1"/>
</dbReference>
<organism>
    <name type="scientific">Xanthomonas campestris pv. campestris (strain ATCC 33913 / DSM 3586 / NCPPB 528 / LMG 568 / P 25)</name>
    <dbReference type="NCBI Taxonomy" id="190485"/>
    <lineage>
        <taxon>Bacteria</taxon>
        <taxon>Pseudomonadati</taxon>
        <taxon>Pseudomonadota</taxon>
        <taxon>Gammaproteobacteria</taxon>
        <taxon>Lysobacterales</taxon>
        <taxon>Lysobacteraceae</taxon>
        <taxon>Xanthomonas</taxon>
    </lineage>
</organism>
<sequence length="230" mass="23843">MSRLPSLSSLCLAIACSALLGGCVAAGDVRPFAELAPIVPVVAPVAQPTAGAIYAAGPSLNLYGDRRARDVGDLLTVNLVENTTASSTANTSISKADTVDMSTPTLLGVPLTVNGIDVLRNSTSGDRSFDGKGNTAQSNRMQGSVTVTVMQRLPNGNLVIQGQKNLRLTQGDELVQVQGIVRAADIAPDNSVPSSKVADARIAYGGRGAIAQSNAMGWLSRFFNSRLSPY</sequence>
<gene>
    <name evidence="1" type="primary">flgH</name>
    <name type="ordered locus">XCC1946</name>
</gene>
<accession>Q8P9B9</accession>